<sequence length="158" mass="18380">MGRFLLVTLSMLVVTFSLNEANSCCCPQDWLPKNGFCYKVFNDLKNWNDAEMFCRKFKPGCHLASIHSNADSADLAEYISDYLKSDGHVWIGLNDPRKQRTWVWSDRSSTNYLAWNQGEPNNSKNIEYCVHLWALTGYLKWNDTPCEALYHFICQCKF</sequence>
<organism>
    <name type="scientific">Notechis scutatus scutatus</name>
    <name type="common">Mainland tiger snake</name>
    <name type="synonym">Common tiger snake</name>
    <dbReference type="NCBI Taxonomy" id="70142"/>
    <lineage>
        <taxon>Eukaryota</taxon>
        <taxon>Metazoa</taxon>
        <taxon>Chordata</taxon>
        <taxon>Craniata</taxon>
        <taxon>Vertebrata</taxon>
        <taxon>Euteleostomi</taxon>
        <taxon>Lepidosauria</taxon>
        <taxon>Squamata</taxon>
        <taxon>Bifurcata</taxon>
        <taxon>Unidentata</taxon>
        <taxon>Episquamata</taxon>
        <taxon>Toxicofera</taxon>
        <taxon>Serpentes</taxon>
        <taxon>Colubroidea</taxon>
        <taxon>Elapidae</taxon>
        <taxon>Hydrophiinae</taxon>
        <taxon>Notechis</taxon>
    </lineage>
</organism>
<dbReference type="EMBL" id="EF194748">
    <property type="protein sequence ID" value="ABP94115.1"/>
    <property type="molecule type" value="mRNA"/>
</dbReference>
<dbReference type="SMR" id="D2YVK5"/>
<dbReference type="GO" id="GO:0005576">
    <property type="term" value="C:extracellular region"/>
    <property type="evidence" value="ECO:0007669"/>
    <property type="project" value="UniProtKB-SubCell"/>
</dbReference>
<dbReference type="GO" id="GO:0030246">
    <property type="term" value="F:carbohydrate binding"/>
    <property type="evidence" value="ECO:0007669"/>
    <property type="project" value="UniProtKB-KW"/>
</dbReference>
<dbReference type="GO" id="GO:0046872">
    <property type="term" value="F:metal ion binding"/>
    <property type="evidence" value="ECO:0007669"/>
    <property type="project" value="UniProtKB-KW"/>
</dbReference>
<dbReference type="CDD" id="cd03594">
    <property type="entry name" value="CLECT_REG-1_like"/>
    <property type="match status" value="1"/>
</dbReference>
<dbReference type="FunFam" id="3.10.100.10:FF:000015">
    <property type="entry name" value="C-type lectin Cal"/>
    <property type="match status" value="1"/>
</dbReference>
<dbReference type="Gene3D" id="3.10.100.10">
    <property type="entry name" value="Mannose-Binding Protein A, subunit A"/>
    <property type="match status" value="1"/>
</dbReference>
<dbReference type="InterPro" id="IPR001304">
    <property type="entry name" value="C-type_lectin-like"/>
</dbReference>
<dbReference type="InterPro" id="IPR016186">
    <property type="entry name" value="C-type_lectin-like/link_sf"/>
</dbReference>
<dbReference type="InterPro" id="IPR050111">
    <property type="entry name" value="C-type_lectin/snaclec_domain"/>
</dbReference>
<dbReference type="InterPro" id="IPR018378">
    <property type="entry name" value="C-type_lectin_CS"/>
</dbReference>
<dbReference type="InterPro" id="IPR016187">
    <property type="entry name" value="CTDL_fold"/>
</dbReference>
<dbReference type="PANTHER" id="PTHR22803">
    <property type="entry name" value="MANNOSE, PHOSPHOLIPASE, LECTIN RECEPTOR RELATED"/>
    <property type="match status" value="1"/>
</dbReference>
<dbReference type="Pfam" id="PF00059">
    <property type="entry name" value="Lectin_C"/>
    <property type="match status" value="1"/>
</dbReference>
<dbReference type="PRINTS" id="PR01504">
    <property type="entry name" value="PNCREATITSAP"/>
</dbReference>
<dbReference type="SMART" id="SM00034">
    <property type="entry name" value="CLECT"/>
    <property type="match status" value="1"/>
</dbReference>
<dbReference type="SUPFAM" id="SSF56436">
    <property type="entry name" value="C-type lectin-like"/>
    <property type="match status" value="1"/>
</dbReference>
<dbReference type="PROSITE" id="PS00615">
    <property type="entry name" value="C_TYPE_LECTIN_1"/>
    <property type="match status" value="1"/>
</dbReference>
<dbReference type="PROSITE" id="PS50041">
    <property type="entry name" value="C_TYPE_LECTIN_2"/>
    <property type="match status" value="1"/>
</dbReference>
<accession>D2YVK5</accession>
<name>LECM_NOTSC</name>
<evidence type="ECO:0000250" key="1"/>
<evidence type="ECO:0000255" key="2"/>
<evidence type="ECO:0000255" key="3">
    <source>
        <dbReference type="PROSITE-ProRule" id="PRU00040"/>
    </source>
</evidence>
<evidence type="ECO:0000305" key="4"/>
<proteinExistence type="evidence at transcript level"/>
<comment type="function">
    <text evidence="1">Mannose-binding lectin that binds to and agglutinates erythrocytes in a calcium-dependent manner.</text>
</comment>
<comment type="subunit">
    <text evidence="1">Homodimer; disulfide-linked.</text>
</comment>
<comment type="subcellular location">
    <subcellularLocation>
        <location evidence="1">Secreted</location>
    </subcellularLocation>
</comment>
<comment type="tissue specificity">
    <text>Expressed by the venom gland.</text>
</comment>
<comment type="similarity">
    <text evidence="4">Belongs to the true venom lectin family.</text>
</comment>
<protein>
    <recommendedName>
        <fullName>C-type lectin mannose-binding isoform</fullName>
        <shortName>CTL</shortName>
    </recommendedName>
    <alternativeName>
        <fullName>Venom C-type lectin mannose binding isoform 1</fullName>
    </alternativeName>
</protein>
<reference key="1">
    <citation type="journal article" date="2011" name="Biochimie">
        <title>Characterisation of a mannose-binding C-type lectin from Oxyuranus scutellatus snake venom.</title>
        <authorList>
            <person name="Earl S.T."/>
            <person name="Robson J."/>
            <person name="Trabi M."/>
            <person name="de Jersey J."/>
            <person name="Masci P.P."/>
            <person name="Lavin M.F."/>
        </authorList>
    </citation>
    <scope>NUCLEOTIDE SEQUENCE [MRNA]</scope>
    <source>
        <tissue>Venom gland</tissue>
    </source>
</reference>
<keyword id="KW-0106">Calcium</keyword>
<keyword id="KW-1015">Disulfide bond</keyword>
<keyword id="KW-0325">Glycoprotein</keyword>
<keyword id="KW-0348">Hemagglutinin</keyword>
<keyword id="KW-0430">Lectin</keyword>
<keyword id="KW-0479">Metal-binding</keyword>
<keyword id="KW-0964">Secreted</keyword>
<keyword id="KW-0732">Signal</keyword>
<feature type="signal peptide" evidence="2">
    <location>
        <begin position="1"/>
        <end position="20"/>
    </location>
</feature>
<feature type="chain" id="PRO_0000422551" description="C-type lectin mannose-binding isoform">
    <location>
        <begin position="21"/>
        <end position="158"/>
    </location>
</feature>
<feature type="domain" description="C-type lectin" evidence="3">
    <location>
        <begin position="33"/>
        <end position="155"/>
    </location>
</feature>
<feature type="short sequence motif" description="Mannose-binding">
    <location>
        <begin position="119"/>
        <end position="121"/>
    </location>
</feature>
<feature type="binding site" evidence="1">
    <location>
        <position position="127"/>
    </location>
    <ligand>
        <name>Ca(2+)</name>
        <dbReference type="ChEBI" id="CHEBI:29108"/>
    </ligand>
</feature>
<feature type="binding site" evidence="1">
    <location>
        <position position="142"/>
    </location>
    <ligand>
        <name>Ca(2+)</name>
        <dbReference type="ChEBI" id="CHEBI:29108"/>
    </ligand>
</feature>
<feature type="binding site" evidence="1">
    <location>
        <position position="143"/>
    </location>
    <ligand>
        <name>Ca(2+)</name>
        <dbReference type="ChEBI" id="CHEBI:29108"/>
    </ligand>
</feature>
<feature type="glycosylation site" description="N-linked (GlcNAc...) asparagine" evidence="2">
    <location>
        <position position="121"/>
    </location>
</feature>
<feature type="disulfide bond" evidence="3">
    <location>
        <begin position="26"/>
        <end position="37"/>
    </location>
</feature>
<feature type="disulfide bond" evidence="3">
    <location>
        <begin position="54"/>
        <end position="154"/>
    </location>
</feature>
<feature type="disulfide bond" evidence="3">
    <location>
        <begin position="129"/>
        <end position="146"/>
    </location>
</feature>